<proteinExistence type="inferred from homology"/>
<feature type="chain" id="PRO_1000021760" description="Adenylate kinase">
    <location>
        <begin position="1"/>
        <end position="216"/>
    </location>
</feature>
<feature type="region of interest" description="NMP" evidence="1">
    <location>
        <begin position="30"/>
        <end position="59"/>
    </location>
</feature>
<feature type="region of interest" description="LID" evidence="1">
    <location>
        <begin position="122"/>
        <end position="159"/>
    </location>
</feature>
<feature type="binding site" evidence="1">
    <location>
        <begin position="10"/>
        <end position="15"/>
    </location>
    <ligand>
        <name>ATP</name>
        <dbReference type="ChEBI" id="CHEBI:30616"/>
    </ligand>
</feature>
<feature type="binding site" evidence="1">
    <location>
        <position position="31"/>
    </location>
    <ligand>
        <name>AMP</name>
        <dbReference type="ChEBI" id="CHEBI:456215"/>
    </ligand>
</feature>
<feature type="binding site" evidence="1">
    <location>
        <position position="36"/>
    </location>
    <ligand>
        <name>AMP</name>
        <dbReference type="ChEBI" id="CHEBI:456215"/>
    </ligand>
</feature>
<feature type="binding site" evidence="1">
    <location>
        <begin position="57"/>
        <end position="59"/>
    </location>
    <ligand>
        <name>AMP</name>
        <dbReference type="ChEBI" id="CHEBI:456215"/>
    </ligand>
</feature>
<feature type="binding site" evidence="1">
    <location>
        <begin position="85"/>
        <end position="88"/>
    </location>
    <ligand>
        <name>AMP</name>
        <dbReference type="ChEBI" id="CHEBI:456215"/>
    </ligand>
</feature>
<feature type="binding site" evidence="1">
    <location>
        <position position="92"/>
    </location>
    <ligand>
        <name>AMP</name>
        <dbReference type="ChEBI" id="CHEBI:456215"/>
    </ligand>
</feature>
<feature type="binding site" evidence="1">
    <location>
        <position position="123"/>
    </location>
    <ligand>
        <name>ATP</name>
        <dbReference type="ChEBI" id="CHEBI:30616"/>
    </ligand>
</feature>
<feature type="binding site" evidence="1">
    <location>
        <begin position="132"/>
        <end position="133"/>
    </location>
    <ligand>
        <name>ATP</name>
        <dbReference type="ChEBI" id="CHEBI:30616"/>
    </ligand>
</feature>
<feature type="binding site" evidence="1">
    <location>
        <position position="156"/>
    </location>
    <ligand>
        <name>AMP</name>
        <dbReference type="ChEBI" id="CHEBI:456215"/>
    </ligand>
</feature>
<feature type="binding site" evidence="1">
    <location>
        <position position="167"/>
    </location>
    <ligand>
        <name>AMP</name>
        <dbReference type="ChEBI" id="CHEBI:456215"/>
    </ligand>
</feature>
<feature type="binding site" evidence="1">
    <location>
        <position position="202"/>
    </location>
    <ligand>
        <name>ATP</name>
        <dbReference type="ChEBI" id="CHEBI:30616"/>
    </ligand>
</feature>
<sequence length="216" mass="23223">MRVILLGAPGAGKGTQAKFITEKFGIPQISTGDMLRAAVKAGTPLGLELKKVMDAGQLVSDELIISLVKERIAQPDCANGCLFDGFPRTIPQAEAMVAAGVDIDAVVEIAVDDEEIVGRMAGRRVHLASGRTYHIQYNPPKVEGKDDETGEDLIQRDDDKEETVRHRLSVYHSQTKPLVDFYQKLSAANGGKPKYSHIEGVGSVEAITAKVLAALS</sequence>
<accession>A5W880</accession>
<protein>
    <recommendedName>
        <fullName evidence="1">Adenylate kinase</fullName>
        <shortName evidence="1">AK</shortName>
        <ecNumber evidence="1">2.7.4.3</ecNumber>
    </recommendedName>
    <alternativeName>
        <fullName evidence="1">ATP-AMP transphosphorylase</fullName>
    </alternativeName>
    <alternativeName>
        <fullName evidence="1">ATP:AMP phosphotransferase</fullName>
    </alternativeName>
    <alternativeName>
        <fullName evidence="1">Adenylate monophosphate kinase</fullName>
    </alternativeName>
</protein>
<comment type="function">
    <text evidence="1">Catalyzes the reversible transfer of the terminal phosphate group between ATP and AMP. Plays an important role in cellular energy homeostasis and in adenine nucleotide metabolism.</text>
</comment>
<comment type="catalytic activity">
    <reaction evidence="1">
        <text>AMP + ATP = 2 ADP</text>
        <dbReference type="Rhea" id="RHEA:12973"/>
        <dbReference type="ChEBI" id="CHEBI:30616"/>
        <dbReference type="ChEBI" id="CHEBI:456215"/>
        <dbReference type="ChEBI" id="CHEBI:456216"/>
        <dbReference type="EC" id="2.7.4.3"/>
    </reaction>
</comment>
<comment type="pathway">
    <text evidence="1">Purine metabolism; AMP biosynthesis via salvage pathway; AMP from ADP: step 1/1.</text>
</comment>
<comment type="subunit">
    <text evidence="1">Monomer.</text>
</comment>
<comment type="subcellular location">
    <subcellularLocation>
        <location evidence="1">Cytoplasm</location>
    </subcellularLocation>
</comment>
<comment type="domain">
    <text evidence="1">Consists of three domains, a large central CORE domain and two small peripheral domains, NMPbind and LID, which undergo movements during catalysis. The LID domain closes over the site of phosphoryl transfer upon ATP binding. Assembling and dissambling the active center during each catalytic cycle provides an effective means to prevent ATP hydrolysis.</text>
</comment>
<comment type="similarity">
    <text evidence="1">Belongs to the adenylate kinase family.</text>
</comment>
<keyword id="KW-0067">ATP-binding</keyword>
<keyword id="KW-0963">Cytoplasm</keyword>
<keyword id="KW-0418">Kinase</keyword>
<keyword id="KW-0545">Nucleotide biosynthesis</keyword>
<keyword id="KW-0547">Nucleotide-binding</keyword>
<keyword id="KW-0808">Transferase</keyword>
<evidence type="ECO:0000255" key="1">
    <source>
        <dbReference type="HAMAP-Rule" id="MF_00235"/>
    </source>
</evidence>
<organism>
    <name type="scientific">Pseudomonas putida (strain ATCC 700007 / DSM 6899 / JCM 31910 / BCRC 17059 / LMG 24140 / F1)</name>
    <dbReference type="NCBI Taxonomy" id="351746"/>
    <lineage>
        <taxon>Bacteria</taxon>
        <taxon>Pseudomonadati</taxon>
        <taxon>Pseudomonadota</taxon>
        <taxon>Gammaproteobacteria</taxon>
        <taxon>Pseudomonadales</taxon>
        <taxon>Pseudomonadaceae</taxon>
        <taxon>Pseudomonas</taxon>
    </lineage>
</organism>
<reference key="1">
    <citation type="submission" date="2007-05" db="EMBL/GenBank/DDBJ databases">
        <title>Complete sequence of Pseudomonas putida F1.</title>
        <authorList>
            <consortium name="US DOE Joint Genome Institute"/>
            <person name="Copeland A."/>
            <person name="Lucas S."/>
            <person name="Lapidus A."/>
            <person name="Barry K."/>
            <person name="Detter J.C."/>
            <person name="Glavina del Rio T."/>
            <person name="Hammon N."/>
            <person name="Israni S."/>
            <person name="Dalin E."/>
            <person name="Tice H."/>
            <person name="Pitluck S."/>
            <person name="Chain P."/>
            <person name="Malfatti S."/>
            <person name="Shin M."/>
            <person name="Vergez L."/>
            <person name="Schmutz J."/>
            <person name="Larimer F."/>
            <person name="Land M."/>
            <person name="Hauser L."/>
            <person name="Kyrpides N."/>
            <person name="Lykidis A."/>
            <person name="Parales R."/>
            <person name="Richardson P."/>
        </authorList>
    </citation>
    <scope>NUCLEOTIDE SEQUENCE [LARGE SCALE GENOMIC DNA]</scope>
    <source>
        <strain>ATCC 700007 / DSM 6899 / JCM 31910 / BCRC 17059 / LMG 24140 / F1</strain>
    </source>
</reference>
<gene>
    <name evidence="1" type="primary">adk</name>
    <name type="ordered locus">Pput_4216</name>
</gene>
<name>KAD_PSEP1</name>
<dbReference type="EC" id="2.7.4.3" evidence="1"/>
<dbReference type="EMBL" id="CP000712">
    <property type="protein sequence ID" value="ABQ80340.1"/>
    <property type="molecule type" value="Genomic_DNA"/>
</dbReference>
<dbReference type="SMR" id="A5W880"/>
<dbReference type="KEGG" id="ppf:Pput_4216"/>
<dbReference type="eggNOG" id="COG0563">
    <property type="taxonomic scope" value="Bacteria"/>
</dbReference>
<dbReference type="HOGENOM" id="CLU_032354_1_2_6"/>
<dbReference type="UniPathway" id="UPA00588">
    <property type="reaction ID" value="UER00649"/>
</dbReference>
<dbReference type="GO" id="GO:0005737">
    <property type="term" value="C:cytoplasm"/>
    <property type="evidence" value="ECO:0007669"/>
    <property type="project" value="UniProtKB-SubCell"/>
</dbReference>
<dbReference type="GO" id="GO:0004017">
    <property type="term" value="F:adenylate kinase activity"/>
    <property type="evidence" value="ECO:0007669"/>
    <property type="project" value="UniProtKB-UniRule"/>
</dbReference>
<dbReference type="GO" id="GO:0005524">
    <property type="term" value="F:ATP binding"/>
    <property type="evidence" value="ECO:0007669"/>
    <property type="project" value="UniProtKB-UniRule"/>
</dbReference>
<dbReference type="GO" id="GO:0044209">
    <property type="term" value="P:AMP salvage"/>
    <property type="evidence" value="ECO:0007669"/>
    <property type="project" value="UniProtKB-UniRule"/>
</dbReference>
<dbReference type="CDD" id="cd01428">
    <property type="entry name" value="ADK"/>
    <property type="match status" value="1"/>
</dbReference>
<dbReference type="FunFam" id="3.40.50.300:FF:000106">
    <property type="entry name" value="Adenylate kinase mitochondrial"/>
    <property type="match status" value="1"/>
</dbReference>
<dbReference type="Gene3D" id="3.40.50.300">
    <property type="entry name" value="P-loop containing nucleotide triphosphate hydrolases"/>
    <property type="match status" value="1"/>
</dbReference>
<dbReference type="HAMAP" id="MF_00235">
    <property type="entry name" value="Adenylate_kinase_Adk"/>
    <property type="match status" value="1"/>
</dbReference>
<dbReference type="InterPro" id="IPR006259">
    <property type="entry name" value="Adenyl_kin_sub"/>
</dbReference>
<dbReference type="InterPro" id="IPR000850">
    <property type="entry name" value="Adenylat/UMP-CMP_kin"/>
</dbReference>
<dbReference type="InterPro" id="IPR033690">
    <property type="entry name" value="Adenylat_kinase_CS"/>
</dbReference>
<dbReference type="InterPro" id="IPR007862">
    <property type="entry name" value="Adenylate_kinase_lid-dom"/>
</dbReference>
<dbReference type="InterPro" id="IPR027417">
    <property type="entry name" value="P-loop_NTPase"/>
</dbReference>
<dbReference type="NCBIfam" id="TIGR01351">
    <property type="entry name" value="adk"/>
    <property type="match status" value="1"/>
</dbReference>
<dbReference type="NCBIfam" id="NF001379">
    <property type="entry name" value="PRK00279.1-1"/>
    <property type="match status" value="1"/>
</dbReference>
<dbReference type="NCBIfam" id="NF001380">
    <property type="entry name" value="PRK00279.1-2"/>
    <property type="match status" value="1"/>
</dbReference>
<dbReference type="NCBIfam" id="NF001381">
    <property type="entry name" value="PRK00279.1-3"/>
    <property type="match status" value="1"/>
</dbReference>
<dbReference type="NCBIfam" id="NF011100">
    <property type="entry name" value="PRK14527.1"/>
    <property type="match status" value="1"/>
</dbReference>
<dbReference type="PANTHER" id="PTHR23359">
    <property type="entry name" value="NUCLEOTIDE KINASE"/>
    <property type="match status" value="1"/>
</dbReference>
<dbReference type="Pfam" id="PF00406">
    <property type="entry name" value="ADK"/>
    <property type="match status" value="1"/>
</dbReference>
<dbReference type="Pfam" id="PF05191">
    <property type="entry name" value="ADK_lid"/>
    <property type="match status" value="1"/>
</dbReference>
<dbReference type="PRINTS" id="PR00094">
    <property type="entry name" value="ADENYLTKNASE"/>
</dbReference>
<dbReference type="SUPFAM" id="SSF52540">
    <property type="entry name" value="P-loop containing nucleoside triphosphate hydrolases"/>
    <property type="match status" value="1"/>
</dbReference>
<dbReference type="PROSITE" id="PS00113">
    <property type="entry name" value="ADENYLATE_KINASE"/>
    <property type="match status" value="1"/>
</dbReference>